<protein>
    <recommendedName>
        <fullName>Proliferating cell nuclear antigen</fullName>
        <shortName>PCNA</shortName>
    </recommendedName>
    <alternativeName>
        <fullName>Cyclin</fullName>
    </alternativeName>
</protein>
<proteinExistence type="evidence at transcript level"/>
<name>PCNA_BOMMO</name>
<comment type="function">
    <text>This protein is an auxiliary protein of DNA polymerase delta and is involved in the control of eukaryotic DNA replication by increasing the polymerase's processibility during elongation of the leading strand.</text>
</comment>
<comment type="subunit">
    <text evidence="1">Homotrimer. Forms a complex with activator 1 heteropentamer in the presence of ATP (By similarity).</text>
</comment>
<comment type="subcellular location">
    <subcellularLocation>
        <location>Nucleus</location>
    </subcellularLocation>
</comment>
<comment type="similarity">
    <text evidence="3">Belongs to the PCNA family.</text>
</comment>
<organism>
    <name type="scientific">Bombyx mori</name>
    <name type="common">Silk moth</name>
    <dbReference type="NCBI Taxonomy" id="7091"/>
    <lineage>
        <taxon>Eukaryota</taxon>
        <taxon>Metazoa</taxon>
        <taxon>Ecdysozoa</taxon>
        <taxon>Arthropoda</taxon>
        <taxon>Hexapoda</taxon>
        <taxon>Insecta</taxon>
        <taxon>Pterygota</taxon>
        <taxon>Neoptera</taxon>
        <taxon>Endopterygota</taxon>
        <taxon>Lepidoptera</taxon>
        <taxon>Glossata</taxon>
        <taxon>Ditrysia</taxon>
        <taxon>Bombycoidea</taxon>
        <taxon>Bombycidae</taxon>
        <taxon>Bombycinae</taxon>
        <taxon>Bombyx</taxon>
    </lineage>
</organism>
<dbReference type="EMBL" id="AB002264">
    <property type="protein sequence ID" value="BAA19522.1"/>
    <property type="molecule type" value="mRNA"/>
</dbReference>
<dbReference type="EMBL" id="AB002265">
    <property type="protein sequence ID" value="BAA19523.1"/>
    <property type="molecule type" value="Genomic_DNA"/>
</dbReference>
<dbReference type="PIR" id="JC5890">
    <property type="entry name" value="JC5890"/>
</dbReference>
<dbReference type="RefSeq" id="NP_001036825.1">
    <property type="nucleotide sequence ID" value="NM_001043360.1"/>
</dbReference>
<dbReference type="SMR" id="O01377"/>
<dbReference type="FunCoup" id="O01377">
    <property type="interactions" value="1800"/>
</dbReference>
<dbReference type="STRING" id="7091.O01377"/>
<dbReference type="PaxDb" id="7091-BGIBMGA010906-TA"/>
<dbReference type="EnsemblMetazoa" id="NM_001043360.1">
    <property type="protein sequence ID" value="NP_001036825.1"/>
    <property type="gene ID" value="GeneID_692356"/>
</dbReference>
<dbReference type="GeneID" id="692356"/>
<dbReference type="KEGG" id="bmor:692356"/>
<dbReference type="CTD" id="5111"/>
<dbReference type="eggNOG" id="KOG1636">
    <property type="taxonomic scope" value="Eukaryota"/>
</dbReference>
<dbReference type="HOGENOM" id="CLU_043978_3_0_1"/>
<dbReference type="InParanoid" id="O01377"/>
<dbReference type="OrthoDB" id="224078at7088"/>
<dbReference type="Proteomes" id="UP000005204">
    <property type="component" value="Unassembled WGS sequence"/>
</dbReference>
<dbReference type="GO" id="GO:0043626">
    <property type="term" value="C:PCNA complex"/>
    <property type="evidence" value="ECO:0007669"/>
    <property type="project" value="TreeGrafter"/>
</dbReference>
<dbReference type="GO" id="GO:0003677">
    <property type="term" value="F:DNA binding"/>
    <property type="evidence" value="ECO:0007669"/>
    <property type="project" value="UniProtKB-KW"/>
</dbReference>
<dbReference type="GO" id="GO:0030337">
    <property type="term" value="F:DNA polymerase processivity factor activity"/>
    <property type="evidence" value="ECO:0007669"/>
    <property type="project" value="InterPro"/>
</dbReference>
<dbReference type="GO" id="GO:0006272">
    <property type="term" value="P:leading strand elongation"/>
    <property type="evidence" value="ECO:0007669"/>
    <property type="project" value="TreeGrafter"/>
</dbReference>
<dbReference type="GO" id="GO:0006298">
    <property type="term" value="P:mismatch repair"/>
    <property type="evidence" value="ECO:0007669"/>
    <property type="project" value="TreeGrafter"/>
</dbReference>
<dbReference type="GO" id="GO:0006275">
    <property type="term" value="P:regulation of DNA replication"/>
    <property type="evidence" value="ECO:0007669"/>
    <property type="project" value="InterPro"/>
</dbReference>
<dbReference type="GO" id="GO:0019985">
    <property type="term" value="P:translesion synthesis"/>
    <property type="evidence" value="ECO:0007669"/>
    <property type="project" value="TreeGrafter"/>
</dbReference>
<dbReference type="CDD" id="cd00577">
    <property type="entry name" value="PCNA"/>
    <property type="match status" value="1"/>
</dbReference>
<dbReference type="FunFam" id="3.10.150.10:FF:000006">
    <property type="entry name" value="Proliferating cell nuclear antigen"/>
    <property type="match status" value="1"/>
</dbReference>
<dbReference type="FunFam" id="3.10.150.10:FF:000008">
    <property type="entry name" value="Proliferating cell nuclear antigen"/>
    <property type="match status" value="1"/>
</dbReference>
<dbReference type="FunFam" id="3.70.10.10:FF:000001">
    <property type="entry name" value="Proliferating cell nuclear antigen"/>
    <property type="match status" value="1"/>
</dbReference>
<dbReference type="Gene3D" id="3.70.10.10">
    <property type="match status" value="1"/>
</dbReference>
<dbReference type="HAMAP" id="MF_00317">
    <property type="entry name" value="DNApol_clamp_arch"/>
    <property type="match status" value="1"/>
</dbReference>
<dbReference type="InterPro" id="IPR046938">
    <property type="entry name" value="DNA_clamp_sf"/>
</dbReference>
<dbReference type="InterPro" id="IPR000730">
    <property type="entry name" value="Pr_cel_nuc_antig"/>
</dbReference>
<dbReference type="InterPro" id="IPR022649">
    <property type="entry name" value="Pr_cel_nuc_antig_C"/>
</dbReference>
<dbReference type="InterPro" id="IPR022659">
    <property type="entry name" value="Pr_cel_nuc_antig_CS"/>
</dbReference>
<dbReference type="InterPro" id="IPR022648">
    <property type="entry name" value="Pr_cel_nuc_antig_N"/>
</dbReference>
<dbReference type="NCBIfam" id="TIGR00590">
    <property type="entry name" value="pcna"/>
    <property type="match status" value="1"/>
</dbReference>
<dbReference type="PANTHER" id="PTHR11352">
    <property type="entry name" value="PROLIFERATING CELL NUCLEAR ANTIGEN"/>
    <property type="match status" value="1"/>
</dbReference>
<dbReference type="PANTHER" id="PTHR11352:SF0">
    <property type="entry name" value="PROLIFERATING CELL NUCLEAR ANTIGEN"/>
    <property type="match status" value="1"/>
</dbReference>
<dbReference type="Pfam" id="PF02747">
    <property type="entry name" value="PCNA_C"/>
    <property type="match status" value="1"/>
</dbReference>
<dbReference type="Pfam" id="PF00705">
    <property type="entry name" value="PCNA_N"/>
    <property type="match status" value="1"/>
</dbReference>
<dbReference type="PRINTS" id="PR00339">
    <property type="entry name" value="PCNACYCLIN"/>
</dbReference>
<dbReference type="SUPFAM" id="SSF55979">
    <property type="entry name" value="DNA clamp"/>
    <property type="match status" value="2"/>
</dbReference>
<dbReference type="PROSITE" id="PS01251">
    <property type="entry name" value="PCNA_1"/>
    <property type="match status" value="1"/>
</dbReference>
<dbReference type="PROSITE" id="PS00293">
    <property type="entry name" value="PCNA_2"/>
    <property type="match status" value="1"/>
</dbReference>
<feature type="chain" id="PRO_0000149169" description="Proliferating cell nuclear antigen">
    <location>
        <begin position="1"/>
        <end position="260"/>
    </location>
</feature>
<feature type="DNA-binding region" evidence="2">
    <location>
        <begin position="61"/>
        <end position="80"/>
    </location>
</feature>
<gene>
    <name type="primary">PCNA</name>
</gene>
<keyword id="KW-0235">DNA replication</keyword>
<keyword id="KW-0238">DNA-binding</keyword>
<keyword id="KW-0539">Nucleus</keyword>
<keyword id="KW-1185">Reference proteome</keyword>
<reference key="1">
    <citation type="journal article" date="1997" name="J. Biochem.">
        <title>Involvement of the DNA replication-related element (DRE) and DRE-binding factor (DREF) in transcriptional regulation of the Bombyx mori PCNA gene.</title>
        <authorList>
            <person name="Takahashi Y."/>
            <person name="Yamaguchi M."/>
            <person name="Hirose F."/>
            <person name="Kobayashi J."/>
            <person name="Miyajima S."/>
            <person name="Matsukage A."/>
        </authorList>
    </citation>
    <scope>NUCLEOTIDE SEQUENCE [GENOMIC DNA / MRNA]</scope>
</reference>
<evidence type="ECO:0000250" key="1"/>
<evidence type="ECO:0000255" key="2"/>
<evidence type="ECO:0000305" key="3"/>
<sequence>MFEARLLRSSILKKVLEAIKDLLTQATFDCDDNGIQLQAMDNSHVSLVSLTLRADGFDKYRCDRNISMGMNLGSMSKILIFAGDKDTATIKAQDNADNVTFVFESPNQEKVSDYEMKLMNLDLEHLGIPETEYSCTIRMPSSEFARICRDLSQFGESMVISCTKEGVKFSATGDIGSANVKLAQTASIDKEEEAVVIEMEEPVTLTFACQYLNYFTKATSLSPQVQLSMSADVPLVVEYRIPDIGHIRYYLAPKIEEEDS</sequence>
<accession>O01377</accession>